<evidence type="ECO:0000250" key="1"/>
<evidence type="ECO:0000255" key="2">
    <source>
        <dbReference type="HAMAP-Rule" id="MF_01158"/>
    </source>
</evidence>
<feature type="chain" id="PRO_1000065565" description="DnaA regulatory inactivator Hda">
    <location>
        <begin position="1"/>
        <end position="241"/>
    </location>
</feature>
<organism>
    <name type="scientific">Salmonella paratyphi A (strain ATCC 9150 / SARB42)</name>
    <dbReference type="NCBI Taxonomy" id="295319"/>
    <lineage>
        <taxon>Bacteria</taxon>
        <taxon>Pseudomonadati</taxon>
        <taxon>Pseudomonadota</taxon>
        <taxon>Gammaproteobacteria</taxon>
        <taxon>Enterobacterales</taxon>
        <taxon>Enterobacteriaceae</taxon>
        <taxon>Salmonella</taxon>
    </lineage>
</organism>
<proteinExistence type="inferred from homology"/>
<comment type="function">
    <text evidence="1">Mediates the interaction of DNA replication initiator protein DnaA with DNA polymerase subunit beta sliding clamp (dnaN). Stimulates hydrolysis of ATP-DnaA to ADP-DnaA, rendering DnaA inactive for reinitiation, a process called regulatory inhibition of DnaA or RIDA (By similarity).</text>
</comment>
<comment type="subunit">
    <text evidence="2">The active form seems to be an ADP-bound monomer. Forms the RIDA complex (regulatory inactivation of DnaA) of ATP-DnaA, ADP-Hda and the DNA-loaded beta sliding clamp (dnaN).</text>
</comment>
<comment type="similarity">
    <text evidence="2">Belongs to the DnaA family. HdA subfamily.</text>
</comment>
<sequence>MSFWVEVSLNTPAQLSLPLYLPDDETFASFWPGDNASLLAALQNVLRQEHSGYIYLWAREGAGRSHLLHAACAELSQRGDAVGYVPLDKRTWFVPEVLDGMEHLSLVCIDNIECVAGDELWEMAIFDLYNRILESGKTRLLITGDRPPRQLNLGLPDLASRLDWGQIYKLQPLSDEDKLQALQLRARLRGFELPEDVGRFLLKRLDREMRTLFMTLDQLDHASITAQRKLTIPFVKEILKL</sequence>
<protein>
    <recommendedName>
        <fullName evidence="2">DnaA regulatory inactivator Hda</fullName>
    </recommendedName>
</protein>
<keyword id="KW-0235">DNA replication</keyword>
<keyword id="KW-0236">DNA replication inhibitor</keyword>
<reference key="1">
    <citation type="journal article" date="2004" name="Nat. Genet.">
        <title>Comparison of genome degradation in Paratyphi A and Typhi, human-restricted serovars of Salmonella enterica that cause typhoid.</title>
        <authorList>
            <person name="McClelland M."/>
            <person name="Sanderson K.E."/>
            <person name="Clifton S.W."/>
            <person name="Latreille P."/>
            <person name="Porwollik S."/>
            <person name="Sabo A."/>
            <person name="Meyer R."/>
            <person name="Bieri T."/>
            <person name="Ozersky P."/>
            <person name="McLellan M."/>
            <person name="Harkins C.R."/>
            <person name="Wang C."/>
            <person name="Nguyen C."/>
            <person name="Berghoff A."/>
            <person name="Elliott G."/>
            <person name="Kohlberg S."/>
            <person name="Strong C."/>
            <person name="Du F."/>
            <person name="Carter J."/>
            <person name="Kremizki C."/>
            <person name="Layman D."/>
            <person name="Leonard S."/>
            <person name="Sun H."/>
            <person name="Fulton L."/>
            <person name="Nash W."/>
            <person name="Miner T."/>
            <person name="Minx P."/>
            <person name="Delehaunty K."/>
            <person name="Fronick C."/>
            <person name="Magrini V."/>
            <person name="Nhan M."/>
            <person name="Warren W."/>
            <person name="Florea L."/>
            <person name="Spieth J."/>
            <person name="Wilson R.K."/>
        </authorList>
    </citation>
    <scope>NUCLEOTIDE SEQUENCE [LARGE SCALE GENOMIC DNA]</scope>
    <source>
        <strain>ATCC 9150 / SARB42</strain>
    </source>
</reference>
<gene>
    <name evidence="2" type="primary">hda</name>
    <name type="ordered locus">SPA0371</name>
</gene>
<dbReference type="EMBL" id="CP000026">
    <property type="protein sequence ID" value="AAV76384.1"/>
    <property type="molecule type" value="Genomic_DNA"/>
</dbReference>
<dbReference type="SMR" id="Q5PL41"/>
<dbReference type="KEGG" id="spt:SPA0371"/>
<dbReference type="HOGENOM" id="CLU_072265_1_1_6"/>
<dbReference type="Proteomes" id="UP000008185">
    <property type="component" value="Chromosome"/>
</dbReference>
<dbReference type="GO" id="GO:0006270">
    <property type="term" value="P:DNA replication initiation"/>
    <property type="evidence" value="ECO:0007669"/>
    <property type="project" value="TreeGrafter"/>
</dbReference>
<dbReference type="GO" id="GO:0032297">
    <property type="term" value="P:negative regulation of DNA-templated DNA replication initiation"/>
    <property type="evidence" value="ECO:0007669"/>
    <property type="project" value="InterPro"/>
</dbReference>
<dbReference type="FunFam" id="1.10.8.60:FF:000024">
    <property type="entry name" value="DnaA regulatory inactivator Hda"/>
    <property type="match status" value="1"/>
</dbReference>
<dbReference type="FunFam" id="3.40.50.300:FF:000452">
    <property type="entry name" value="DnaA regulatory inactivator Hda"/>
    <property type="match status" value="1"/>
</dbReference>
<dbReference type="Gene3D" id="1.10.8.60">
    <property type="match status" value="1"/>
</dbReference>
<dbReference type="Gene3D" id="3.40.50.300">
    <property type="entry name" value="P-loop containing nucleotide triphosphate hydrolases"/>
    <property type="match status" value="1"/>
</dbReference>
<dbReference type="HAMAP" id="MF_01158">
    <property type="entry name" value="Hda"/>
    <property type="match status" value="1"/>
</dbReference>
<dbReference type="InterPro" id="IPR020591">
    <property type="entry name" value="Chromosome_initiator_DnaA-like"/>
</dbReference>
<dbReference type="InterPro" id="IPR013317">
    <property type="entry name" value="DnaA_dom"/>
</dbReference>
<dbReference type="InterPro" id="IPR017788">
    <property type="entry name" value="Hda"/>
</dbReference>
<dbReference type="InterPro" id="IPR022864">
    <property type="entry name" value="Hda_Enterobact"/>
</dbReference>
<dbReference type="InterPro" id="IPR055199">
    <property type="entry name" value="Hda_lid"/>
</dbReference>
<dbReference type="InterPro" id="IPR027417">
    <property type="entry name" value="P-loop_NTPase"/>
</dbReference>
<dbReference type="NCBIfam" id="TIGR03420">
    <property type="entry name" value="DnaA_homol_Hda"/>
    <property type="match status" value="1"/>
</dbReference>
<dbReference type="NCBIfam" id="NF005982">
    <property type="entry name" value="PRK08084.1"/>
    <property type="match status" value="1"/>
</dbReference>
<dbReference type="PANTHER" id="PTHR30050">
    <property type="entry name" value="CHROMOSOMAL REPLICATION INITIATOR PROTEIN DNAA"/>
    <property type="match status" value="1"/>
</dbReference>
<dbReference type="PANTHER" id="PTHR30050:SF5">
    <property type="entry name" value="DNAA REGULATORY INACTIVATOR HDA"/>
    <property type="match status" value="1"/>
</dbReference>
<dbReference type="Pfam" id="PF00308">
    <property type="entry name" value="Bac_DnaA"/>
    <property type="match status" value="1"/>
</dbReference>
<dbReference type="Pfam" id="PF22688">
    <property type="entry name" value="Hda_lid"/>
    <property type="match status" value="1"/>
</dbReference>
<dbReference type="PRINTS" id="PR00051">
    <property type="entry name" value="DNAA"/>
</dbReference>
<dbReference type="SUPFAM" id="SSF52540">
    <property type="entry name" value="P-loop containing nucleoside triphosphate hydrolases"/>
    <property type="match status" value="1"/>
</dbReference>
<name>HDA_SALPA</name>
<accession>Q5PL41</accession>